<protein>
    <recommendedName>
        <fullName evidence="1">Phosphoenolpyruvate carboxylase</fullName>
        <shortName evidence="1">PEPC</shortName>
        <shortName evidence="1">PEPCase</shortName>
        <ecNumber evidence="1">4.1.1.31</ecNumber>
    </recommendedName>
</protein>
<gene>
    <name evidence="1" type="primary">ppc</name>
    <name type="ordered locus">AZOSEA06140</name>
    <name type="ORF">ebA1167</name>
</gene>
<evidence type="ECO:0000255" key="1">
    <source>
        <dbReference type="HAMAP-Rule" id="MF_00595"/>
    </source>
</evidence>
<evidence type="ECO:0000305" key="2"/>
<dbReference type="EC" id="4.1.1.31" evidence="1"/>
<dbReference type="EMBL" id="CR555306">
    <property type="protein sequence ID" value="CAI06736.1"/>
    <property type="status" value="ALT_INIT"/>
    <property type="molecule type" value="Genomic_DNA"/>
</dbReference>
<dbReference type="RefSeq" id="WP_041645647.1">
    <property type="nucleotide sequence ID" value="NC_006513.1"/>
</dbReference>
<dbReference type="SMR" id="Q5P7H5"/>
<dbReference type="STRING" id="76114.ebA1167"/>
<dbReference type="KEGG" id="eba:ebA1167"/>
<dbReference type="eggNOG" id="COG2352">
    <property type="taxonomic scope" value="Bacteria"/>
</dbReference>
<dbReference type="HOGENOM" id="CLU_006557_2_0_4"/>
<dbReference type="OrthoDB" id="9768133at2"/>
<dbReference type="Proteomes" id="UP000006552">
    <property type="component" value="Chromosome"/>
</dbReference>
<dbReference type="GO" id="GO:0005829">
    <property type="term" value="C:cytosol"/>
    <property type="evidence" value="ECO:0007669"/>
    <property type="project" value="TreeGrafter"/>
</dbReference>
<dbReference type="GO" id="GO:0000287">
    <property type="term" value="F:magnesium ion binding"/>
    <property type="evidence" value="ECO:0007669"/>
    <property type="project" value="UniProtKB-UniRule"/>
</dbReference>
<dbReference type="GO" id="GO:0008964">
    <property type="term" value="F:phosphoenolpyruvate carboxylase activity"/>
    <property type="evidence" value="ECO:0007669"/>
    <property type="project" value="UniProtKB-UniRule"/>
</dbReference>
<dbReference type="GO" id="GO:0015977">
    <property type="term" value="P:carbon fixation"/>
    <property type="evidence" value="ECO:0007669"/>
    <property type="project" value="UniProtKB-UniRule"/>
</dbReference>
<dbReference type="GO" id="GO:0006107">
    <property type="term" value="P:oxaloacetate metabolic process"/>
    <property type="evidence" value="ECO:0007669"/>
    <property type="project" value="UniProtKB-UniRule"/>
</dbReference>
<dbReference type="GO" id="GO:0006099">
    <property type="term" value="P:tricarboxylic acid cycle"/>
    <property type="evidence" value="ECO:0007669"/>
    <property type="project" value="InterPro"/>
</dbReference>
<dbReference type="Gene3D" id="1.20.1440.90">
    <property type="entry name" value="Phosphoenolpyruvate/pyruvate domain"/>
    <property type="match status" value="1"/>
</dbReference>
<dbReference type="HAMAP" id="MF_00595">
    <property type="entry name" value="PEPcase_type1"/>
    <property type="match status" value="1"/>
</dbReference>
<dbReference type="InterPro" id="IPR021135">
    <property type="entry name" value="PEP_COase"/>
</dbReference>
<dbReference type="InterPro" id="IPR022805">
    <property type="entry name" value="PEP_COase_bac/pln-type"/>
</dbReference>
<dbReference type="InterPro" id="IPR018129">
    <property type="entry name" value="PEP_COase_Lys_AS"/>
</dbReference>
<dbReference type="InterPro" id="IPR033129">
    <property type="entry name" value="PEPCASE_His_AS"/>
</dbReference>
<dbReference type="InterPro" id="IPR015813">
    <property type="entry name" value="Pyrv/PenolPyrv_kinase-like_dom"/>
</dbReference>
<dbReference type="NCBIfam" id="NF000584">
    <property type="entry name" value="PRK00009.1"/>
    <property type="match status" value="1"/>
</dbReference>
<dbReference type="PANTHER" id="PTHR30523">
    <property type="entry name" value="PHOSPHOENOLPYRUVATE CARBOXYLASE"/>
    <property type="match status" value="1"/>
</dbReference>
<dbReference type="PANTHER" id="PTHR30523:SF6">
    <property type="entry name" value="PHOSPHOENOLPYRUVATE CARBOXYLASE"/>
    <property type="match status" value="1"/>
</dbReference>
<dbReference type="Pfam" id="PF00311">
    <property type="entry name" value="PEPcase"/>
    <property type="match status" value="1"/>
</dbReference>
<dbReference type="PRINTS" id="PR00150">
    <property type="entry name" value="PEPCARBXLASE"/>
</dbReference>
<dbReference type="SUPFAM" id="SSF51621">
    <property type="entry name" value="Phosphoenolpyruvate/pyruvate domain"/>
    <property type="match status" value="1"/>
</dbReference>
<dbReference type="PROSITE" id="PS00781">
    <property type="entry name" value="PEPCASE_1"/>
    <property type="match status" value="1"/>
</dbReference>
<dbReference type="PROSITE" id="PS00393">
    <property type="entry name" value="PEPCASE_2"/>
    <property type="match status" value="1"/>
</dbReference>
<comment type="function">
    <text evidence="1">Forms oxaloacetate, a four-carbon dicarboxylic acid source for the tricarboxylic acid cycle.</text>
</comment>
<comment type="catalytic activity">
    <reaction evidence="1">
        <text>oxaloacetate + phosphate = phosphoenolpyruvate + hydrogencarbonate</text>
        <dbReference type="Rhea" id="RHEA:28370"/>
        <dbReference type="ChEBI" id="CHEBI:16452"/>
        <dbReference type="ChEBI" id="CHEBI:17544"/>
        <dbReference type="ChEBI" id="CHEBI:43474"/>
        <dbReference type="ChEBI" id="CHEBI:58702"/>
        <dbReference type="EC" id="4.1.1.31"/>
    </reaction>
</comment>
<comment type="cofactor">
    <cofactor evidence="1">
        <name>Mg(2+)</name>
        <dbReference type="ChEBI" id="CHEBI:18420"/>
    </cofactor>
</comment>
<comment type="similarity">
    <text evidence="1">Belongs to the PEPCase type 1 family.</text>
</comment>
<comment type="sequence caution" evidence="2">
    <conflict type="erroneous initiation">
        <sequence resource="EMBL-CDS" id="CAI06736"/>
    </conflict>
</comment>
<reference key="1">
    <citation type="journal article" date="2005" name="Arch. Microbiol.">
        <title>The genome sequence of an anaerobic aromatic-degrading denitrifying bacterium, strain EbN1.</title>
        <authorList>
            <person name="Rabus R."/>
            <person name="Kube M."/>
            <person name="Heider J."/>
            <person name="Beck A."/>
            <person name="Heitmann K."/>
            <person name="Widdel F."/>
            <person name="Reinhardt R."/>
        </authorList>
    </citation>
    <scope>NUCLEOTIDE SEQUENCE [LARGE SCALE GENOMIC DNA]</scope>
    <source>
        <strain>DSM 19018 / LMG 30748 / EbN1</strain>
    </source>
</reference>
<organism>
    <name type="scientific">Aromatoleum aromaticum (strain DSM 19018 / LMG 30748 / EbN1)</name>
    <name type="common">Azoarcus sp. (strain EbN1)</name>
    <dbReference type="NCBI Taxonomy" id="76114"/>
    <lineage>
        <taxon>Bacteria</taxon>
        <taxon>Pseudomonadati</taxon>
        <taxon>Pseudomonadota</taxon>
        <taxon>Betaproteobacteria</taxon>
        <taxon>Rhodocyclales</taxon>
        <taxon>Rhodocyclaceae</taxon>
        <taxon>Aromatoleum</taxon>
    </lineage>
</organism>
<accession>Q5P7H5</accession>
<sequence>MTEDKDAPLREDIRLLGRVLGDTVRDQHGEAAFALIERIRQTSVRFRRDDDNAARLELEGILDALSREQTIEVVRAFSYFSHLSNIAEDQHHIRRSRAHLIAGSAPREGSVAHALVRALASGLPPARLAAFFDTALISPVLTAHPTEVQRKSILNCETDIAHLLDARDRMTLTPEERQESDEALRRTVLTLWQTRMLRPAKLSVVDEVANGLSYFDATFLRELPHLYANLEDQLVSRDPALAGLELPAFLQVGSWIGGDRDGNPFVTADVLERTLAMQAGAVLGFYLDELHALGARLSLALGLVTASDALLALAARSPDHSPHRNDEPYRRAISGIYARLAATHHALLGTEPPRHPVAVAEPYAAVAELADDLDVIHRSLVANGSAALARGQLRRLRRAVRVFGFHLAPIDLRQNSEVHERVVAELLATARTGTDYATLDEAARVELLIEELATPRPLASPHVRYSDETEGELAIFRTARAAHRRYGGPAIPNCIISKTDDVSDLLELALLLKEAGLLRPHERALDVNIVPLFETIEDLANAPSVMDRLFALPGYMNLLAASRDRTHEVMLGYSDSNKDGGFLTSGWALYKAEIGLIEVFARHGIRLRLFHGRGGSVGRGGGPSYEAILAQPGGAVQGQIRLTEQGEVIAAKYGNPEVGRRNLEVIVAATLEASLLADRAPAPRVEFLDTMQALSDVAFAAYRGLVYDTEGFERYFWESTVISEIAELNIGSRPASRKKGTRIEDLRAIPWVFSWSQCRLMLPGWFGFGSAVKTWLAAHADDGIARLQAMHREWSFFAALLSNMDMVLAKTDLAIASRYAGLVKDVNLRDAIFERIRNEWHDTVDALLAITGQRELLDGNPLLKRSIRNRFPYLDPLNHVQVELLRRHRETHDDARIRLGIHISINGIAAGLRNSG</sequence>
<keyword id="KW-0120">Carbon dioxide fixation</keyword>
<keyword id="KW-0456">Lyase</keyword>
<keyword id="KW-0460">Magnesium</keyword>
<keyword id="KW-1185">Reference proteome</keyword>
<name>CAPP_AROAE</name>
<feature type="chain" id="PRO_0000166579" description="Phosphoenolpyruvate carboxylase">
    <location>
        <begin position="1"/>
        <end position="916"/>
    </location>
</feature>
<feature type="active site" evidence="1">
    <location>
        <position position="144"/>
    </location>
</feature>
<feature type="active site" evidence="1">
    <location>
        <position position="578"/>
    </location>
</feature>
<proteinExistence type="inferred from homology"/>